<name>THII_ECO7I</name>
<keyword id="KW-0067">ATP-binding</keyword>
<keyword id="KW-0963">Cytoplasm</keyword>
<keyword id="KW-1015">Disulfide bond</keyword>
<keyword id="KW-0547">Nucleotide-binding</keyword>
<keyword id="KW-0676">Redox-active center</keyword>
<keyword id="KW-0694">RNA-binding</keyword>
<keyword id="KW-0784">Thiamine biosynthesis</keyword>
<keyword id="KW-0808">Transferase</keyword>
<keyword id="KW-0820">tRNA-binding</keyword>
<protein>
    <recommendedName>
        <fullName evidence="1">tRNA sulfurtransferase</fullName>
        <ecNumber evidence="1">2.8.1.4</ecNumber>
    </recommendedName>
    <alternativeName>
        <fullName evidence="1">Sulfur carrier protein ThiS sulfurtransferase</fullName>
    </alternativeName>
    <alternativeName>
        <fullName evidence="1">Thiamine biosynthesis protein ThiI</fullName>
    </alternativeName>
    <alternativeName>
        <fullName evidence="1">tRNA 4-thiouridine synthase</fullName>
    </alternativeName>
</protein>
<gene>
    <name evidence="1" type="primary">thiI</name>
    <name type="ordered locus">ECIAI39_0253</name>
</gene>
<sequence length="482" mass="54946">MKFIIKLFPEITIKSQSVRLRFIKILTGNIRNVLKHYDETLAVVRHWDNIEVRAKDENQRLAIRDALTRIPGIHHILEVEDVPFTDMHDIFEKALVQYRDQLEGKTFCVRVKRRGKHDFSSIDVERYVGGGLNQHIESARVKLTNPDVTVHLEVEDDRLLLIKGRYEGIGGFPIGTQEDVLSLISGGFDSGVSSYMLMRRGCRVHYCFFNLGGAAHEIGVRQVAHYLWNRFGSSHRVRFVAINFEPVVGEILEKIDDGQMGVILKRMMVRAASKVAERYGVQALVTGEALGQVSSQTLTNLRLIDNVSDTLILRPLISYDKEHIINLARQIGTEDFARTMPEYCGVISKSPTVKAVKSKIEAEEEKFDFSILDKVVEEANNVDIREIAQQTEQEVVEVETVNGFGPNDVILDIRSIDEQEDKPLKVEGIDVVSLPFYKLSTKFGDLDQSKTWLLWCERGVMSRLQALYLREQGFNNVKVYRP</sequence>
<comment type="function">
    <text evidence="1">Catalyzes the ATP-dependent transfer of a sulfur to tRNA to produce 4-thiouridine in position 8 of tRNAs, which functions as a near-UV photosensor. Also catalyzes the transfer of sulfur to the sulfur carrier protein ThiS, forming ThiS-thiocarboxylate. This is a step in the synthesis of thiazole, in the thiamine biosynthesis pathway. The sulfur is donated as persulfide by IscS.</text>
</comment>
<comment type="catalytic activity">
    <reaction evidence="1">
        <text>[ThiI sulfur-carrier protein]-S-sulfanyl-L-cysteine + a uridine in tRNA + 2 reduced [2Fe-2S]-[ferredoxin] + ATP + H(+) = [ThiI sulfur-carrier protein]-L-cysteine + a 4-thiouridine in tRNA + 2 oxidized [2Fe-2S]-[ferredoxin] + AMP + diphosphate</text>
        <dbReference type="Rhea" id="RHEA:24176"/>
        <dbReference type="Rhea" id="RHEA-COMP:10000"/>
        <dbReference type="Rhea" id="RHEA-COMP:10001"/>
        <dbReference type="Rhea" id="RHEA-COMP:13337"/>
        <dbReference type="Rhea" id="RHEA-COMP:13338"/>
        <dbReference type="Rhea" id="RHEA-COMP:13339"/>
        <dbReference type="Rhea" id="RHEA-COMP:13340"/>
        <dbReference type="ChEBI" id="CHEBI:15378"/>
        <dbReference type="ChEBI" id="CHEBI:29950"/>
        <dbReference type="ChEBI" id="CHEBI:30616"/>
        <dbReference type="ChEBI" id="CHEBI:33019"/>
        <dbReference type="ChEBI" id="CHEBI:33737"/>
        <dbReference type="ChEBI" id="CHEBI:33738"/>
        <dbReference type="ChEBI" id="CHEBI:61963"/>
        <dbReference type="ChEBI" id="CHEBI:65315"/>
        <dbReference type="ChEBI" id="CHEBI:136798"/>
        <dbReference type="ChEBI" id="CHEBI:456215"/>
        <dbReference type="EC" id="2.8.1.4"/>
    </reaction>
</comment>
<comment type="catalytic activity">
    <reaction evidence="1">
        <text>[ThiS sulfur-carrier protein]-C-terminal Gly-Gly-AMP + S-sulfanyl-L-cysteinyl-[cysteine desulfurase] + AH2 = [ThiS sulfur-carrier protein]-C-terminal-Gly-aminoethanethioate + L-cysteinyl-[cysteine desulfurase] + A + AMP + 2 H(+)</text>
        <dbReference type="Rhea" id="RHEA:43340"/>
        <dbReference type="Rhea" id="RHEA-COMP:12157"/>
        <dbReference type="Rhea" id="RHEA-COMP:12158"/>
        <dbReference type="Rhea" id="RHEA-COMP:12910"/>
        <dbReference type="Rhea" id="RHEA-COMP:19908"/>
        <dbReference type="ChEBI" id="CHEBI:13193"/>
        <dbReference type="ChEBI" id="CHEBI:15378"/>
        <dbReference type="ChEBI" id="CHEBI:17499"/>
        <dbReference type="ChEBI" id="CHEBI:29950"/>
        <dbReference type="ChEBI" id="CHEBI:61963"/>
        <dbReference type="ChEBI" id="CHEBI:90618"/>
        <dbReference type="ChEBI" id="CHEBI:232372"/>
        <dbReference type="ChEBI" id="CHEBI:456215"/>
    </reaction>
</comment>
<comment type="pathway">
    <text evidence="1">Cofactor biosynthesis; thiamine diphosphate biosynthesis.</text>
</comment>
<comment type="subcellular location">
    <subcellularLocation>
        <location evidence="1">Cytoplasm</location>
    </subcellularLocation>
</comment>
<comment type="similarity">
    <text evidence="1">Belongs to the ThiI family.</text>
</comment>
<organism>
    <name type="scientific">Escherichia coli O7:K1 (strain IAI39 / ExPEC)</name>
    <dbReference type="NCBI Taxonomy" id="585057"/>
    <lineage>
        <taxon>Bacteria</taxon>
        <taxon>Pseudomonadati</taxon>
        <taxon>Pseudomonadota</taxon>
        <taxon>Gammaproteobacteria</taxon>
        <taxon>Enterobacterales</taxon>
        <taxon>Enterobacteriaceae</taxon>
        <taxon>Escherichia</taxon>
    </lineage>
</organism>
<feature type="chain" id="PRO_1000116401" description="tRNA sulfurtransferase">
    <location>
        <begin position="1"/>
        <end position="482"/>
    </location>
</feature>
<feature type="domain" description="THUMP" evidence="1">
    <location>
        <begin position="61"/>
        <end position="165"/>
    </location>
</feature>
<feature type="domain" description="Rhodanese" evidence="1">
    <location>
        <begin position="404"/>
        <end position="482"/>
    </location>
</feature>
<feature type="active site" description="Cysteine persulfide intermediate" evidence="1">
    <location>
        <position position="456"/>
    </location>
</feature>
<feature type="binding site" evidence="1">
    <location>
        <begin position="183"/>
        <end position="184"/>
    </location>
    <ligand>
        <name>ATP</name>
        <dbReference type="ChEBI" id="CHEBI:30616"/>
    </ligand>
</feature>
<feature type="binding site" evidence="1">
    <location>
        <position position="265"/>
    </location>
    <ligand>
        <name>ATP</name>
        <dbReference type="ChEBI" id="CHEBI:30616"/>
    </ligand>
</feature>
<feature type="binding site" evidence="1">
    <location>
        <position position="287"/>
    </location>
    <ligand>
        <name>ATP</name>
        <dbReference type="ChEBI" id="CHEBI:30616"/>
    </ligand>
</feature>
<feature type="binding site" evidence="1">
    <location>
        <position position="296"/>
    </location>
    <ligand>
        <name>ATP</name>
        <dbReference type="ChEBI" id="CHEBI:30616"/>
    </ligand>
</feature>
<feature type="disulfide bond" description="Redox-active" evidence="1">
    <location>
        <begin position="344"/>
        <end position="456"/>
    </location>
</feature>
<accession>B7NJ74</accession>
<evidence type="ECO:0000255" key="1">
    <source>
        <dbReference type="HAMAP-Rule" id="MF_00021"/>
    </source>
</evidence>
<proteinExistence type="inferred from homology"/>
<dbReference type="EC" id="2.8.1.4" evidence="1"/>
<dbReference type="EMBL" id="CU928164">
    <property type="protein sequence ID" value="CAR16393.1"/>
    <property type="molecule type" value="Genomic_DNA"/>
</dbReference>
<dbReference type="RefSeq" id="WP_000668665.1">
    <property type="nucleotide sequence ID" value="NC_011750.1"/>
</dbReference>
<dbReference type="RefSeq" id="YP_002406297.1">
    <property type="nucleotide sequence ID" value="NC_011750.1"/>
</dbReference>
<dbReference type="SMR" id="B7NJ74"/>
<dbReference type="STRING" id="585057.ECIAI39_0253"/>
<dbReference type="KEGG" id="ect:ECIAI39_0253"/>
<dbReference type="PATRIC" id="fig|585057.6.peg.274"/>
<dbReference type="HOGENOM" id="CLU_037952_4_1_6"/>
<dbReference type="UniPathway" id="UPA00060"/>
<dbReference type="Proteomes" id="UP000000749">
    <property type="component" value="Chromosome"/>
</dbReference>
<dbReference type="GO" id="GO:0005829">
    <property type="term" value="C:cytosol"/>
    <property type="evidence" value="ECO:0007669"/>
    <property type="project" value="TreeGrafter"/>
</dbReference>
<dbReference type="GO" id="GO:0005524">
    <property type="term" value="F:ATP binding"/>
    <property type="evidence" value="ECO:0007669"/>
    <property type="project" value="UniProtKB-UniRule"/>
</dbReference>
<dbReference type="GO" id="GO:0004810">
    <property type="term" value="F:CCA tRNA nucleotidyltransferase activity"/>
    <property type="evidence" value="ECO:0007669"/>
    <property type="project" value="InterPro"/>
</dbReference>
<dbReference type="GO" id="GO:0000049">
    <property type="term" value="F:tRNA binding"/>
    <property type="evidence" value="ECO:0007669"/>
    <property type="project" value="UniProtKB-UniRule"/>
</dbReference>
<dbReference type="GO" id="GO:0140741">
    <property type="term" value="F:tRNA-uracil-4 sulfurtransferase activity"/>
    <property type="evidence" value="ECO:0007669"/>
    <property type="project" value="UniProtKB-EC"/>
</dbReference>
<dbReference type="GO" id="GO:0009228">
    <property type="term" value="P:thiamine biosynthetic process"/>
    <property type="evidence" value="ECO:0007669"/>
    <property type="project" value="UniProtKB-KW"/>
</dbReference>
<dbReference type="GO" id="GO:0009229">
    <property type="term" value="P:thiamine diphosphate biosynthetic process"/>
    <property type="evidence" value="ECO:0007669"/>
    <property type="project" value="UniProtKB-UniRule"/>
</dbReference>
<dbReference type="GO" id="GO:0052837">
    <property type="term" value="P:thiazole biosynthetic process"/>
    <property type="evidence" value="ECO:0007669"/>
    <property type="project" value="InterPro"/>
</dbReference>
<dbReference type="GO" id="GO:0002937">
    <property type="term" value="P:tRNA 4-thiouridine biosynthesis"/>
    <property type="evidence" value="ECO:0007669"/>
    <property type="project" value="TreeGrafter"/>
</dbReference>
<dbReference type="CDD" id="cd01712">
    <property type="entry name" value="PPase_ThiI"/>
    <property type="match status" value="1"/>
</dbReference>
<dbReference type="CDD" id="cd00158">
    <property type="entry name" value="RHOD"/>
    <property type="match status" value="1"/>
</dbReference>
<dbReference type="CDD" id="cd11716">
    <property type="entry name" value="THUMP_ThiI"/>
    <property type="match status" value="1"/>
</dbReference>
<dbReference type="FunFam" id="3.30.2130.30:FF:000002">
    <property type="entry name" value="tRNA sulfurtransferase"/>
    <property type="match status" value="1"/>
</dbReference>
<dbReference type="FunFam" id="3.40.250.10:FF:000003">
    <property type="entry name" value="tRNA sulfurtransferase"/>
    <property type="match status" value="1"/>
</dbReference>
<dbReference type="FunFam" id="3.40.50.620:FF:000029">
    <property type="entry name" value="tRNA sulfurtransferase"/>
    <property type="match status" value="1"/>
</dbReference>
<dbReference type="Gene3D" id="3.30.2130.30">
    <property type="match status" value="1"/>
</dbReference>
<dbReference type="Gene3D" id="3.40.50.620">
    <property type="entry name" value="HUPs"/>
    <property type="match status" value="1"/>
</dbReference>
<dbReference type="Gene3D" id="3.40.250.10">
    <property type="entry name" value="Rhodanese-like domain"/>
    <property type="match status" value="1"/>
</dbReference>
<dbReference type="HAMAP" id="MF_00021">
    <property type="entry name" value="ThiI"/>
    <property type="match status" value="1"/>
</dbReference>
<dbReference type="InterPro" id="IPR001763">
    <property type="entry name" value="Rhodanese-like_dom"/>
</dbReference>
<dbReference type="InterPro" id="IPR036873">
    <property type="entry name" value="Rhodanese-like_dom_sf"/>
</dbReference>
<dbReference type="InterPro" id="IPR014729">
    <property type="entry name" value="Rossmann-like_a/b/a_fold"/>
</dbReference>
<dbReference type="InterPro" id="IPR020536">
    <property type="entry name" value="ThiI_AANH"/>
</dbReference>
<dbReference type="InterPro" id="IPR054173">
    <property type="entry name" value="ThiI_fer"/>
</dbReference>
<dbReference type="InterPro" id="IPR049961">
    <property type="entry name" value="ThiI_N"/>
</dbReference>
<dbReference type="InterPro" id="IPR026340">
    <property type="entry name" value="THII_Thiazole_biosynth_dom"/>
</dbReference>
<dbReference type="InterPro" id="IPR004114">
    <property type="entry name" value="THUMP_dom"/>
</dbReference>
<dbReference type="InterPro" id="IPR049962">
    <property type="entry name" value="THUMP_ThiI"/>
</dbReference>
<dbReference type="InterPro" id="IPR003720">
    <property type="entry name" value="tRNA_STrfase"/>
</dbReference>
<dbReference type="InterPro" id="IPR050102">
    <property type="entry name" value="tRNA_sulfurtransferase_ThiI"/>
</dbReference>
<dbReference type="NCBIfam" id="TIGR04271">
    <property type="entry name" value="ThiI_C_thiazole"/>
    <property type="match status" value="1"/>
</dbReference>
<dbReference type="NCBIfam" id="TIGR00342">
    <property type="entry name" value="tRNA uracil 4-sulfurtransferase ThiI"/>
    <property type="match status" value="1"/>
</dbReference>
<dbReference type="PANTHER" id="PTHR43209">
    <property type="entry name" value="TRNA SULFURTRANSFERASE"/>
    <property type="match status" value="1"/>
</dbReference>
<dbReference type="PANTHER" id="PTHR43209:SF1">
    <property type="entry name" value="TRNA SULFURTRANSFERASE"/>
    <property type="match status" value="1"/>
</dbReference>
<dbReference type="Pfam" id="PF02568">
    <property type="entry name" value="ThiI"/>
    <property type="match status" value="1"/>
</dbReference>
<dbReference type="Pfam" id="PF22025">
    <property type="entry name" value="ThiI_fer"/>
    <property type="match status" value="1"/>
</dbReference>
<dbReference type="Pfam" id="PF02926">
    <property type="entry name" value="THUMP"/>
    <property type="match status" value="1"/>
</dbReference>
<dbReference type="SMART" id="SM00981">
    <property type="entry name" value="THUMP"/>
    <property type="match status" value="1"/>
</dbReference>
<dbReference type="SUPFAM" id="SSF52402">
    <property type="entry name" value="Adenine nucleotide alpha hydrolases-like"/>
    <property type="match status" value="1"/>
</dbReference>
<dbReference type="SUPFAM" id="SSF52821">
    <property type="entry name" value="Rhodanese/Cell cycle control phosphatase"/>
    <property type="match status" value="1"/>
</dbReference>
<dbReference type="SUPFAM" id="SSF143437">
    <property type="entry name" value="THUMP domain-like"/>
    <property type="match status" value="1"/>
</dbReference>
<dbReference type="PROSITE" id="PS50206">
    <property type="entry name" value="RHODANESE_3"/>
    <property type="match status" value="1"/>
</dbReference>
<dbReference type="PROSITE" id="PS51165">
    <property type="entry name" value="THUMP"/>
    <property type="match status" value="1"/>
</dbReference>
<reference key="1">
    <citation type="journal article" date="2009" name="PLoS Genet.">
        <title>Organised genome dynamics in the Escherichia coli species results in highly diverse adaptive paths.</title>
        <authorList>
            <person name="Touchon M."/>
            <person name="Hoede C."/>
            <person name="Tenaillon O."/>
            <person name="Barbe V."/>
            <person name="Baeriswyl S."/>
            <person name="Bidet P."/>
            <person name="Bingen E."/>
            <person name="Bonacorsi S."/>
            <person name="Bouchier C."/>
            <person name="Bouvet O."/>
            <person name="Calteau A."/>
            <person name="Chiapello H."/>
            <person name="Clermont O."/>
            <person name="Cruveiller S."/>
            <person name="Danchin A."/>
            <person name="Diard M."/>
            <person name="Dossat C."/>
            <person name="Karoui M.E."/>
            <person name="Frapy E."/>
            <person name="Garry L."/>
            <person name="Ghigo J.M."/>
            <person name="Gilles A.M."/>
            <person name="Johnson J."/>
            <person name="Le Bouguenec C."/>
            <person name="Lescat M."/>
            <person name="Mangenot S."/>
            <person name="Martinez-Jehanne V."/>
            <person name="Matic I."/>
            <person name="Nassif X."/>
            <person name="Oztas S."/>
            <person name="Petit M.A."/>
            <person name="Pichon C."/>
            <person name="Rouy Z."/>
            <person name="Ruf C.S."/>
            <person name="Schneider D."/>
            <person name="Tourret J."/>
            <person name="Vacherie B."/>
            <person name="Vallenet D."/>
            <person name="Medigue C."/>
            <person name="Rocha E.P.C."/>
            <person name="Denamur E."/>
        </authorList>
    </citation>
    <scope>NUCLEOTIDE SEQUENCE [LARGE SCALE GENOMIC DNA]</scope>
    <source>
        <strain>IAI39 / ExPEC</strain>
    </source>
</reference>